<dbReference type="EMBL" id="CP000450">
    <property type="protein sequence ID" value="ABI60566.1"/>
    <property type="molecule type" value="Genomic_DNA"/>
</dbReference>
<dbReference type="EMBL" id="CP000450">
    <property type="protein sequence ID" value="ABI60575.1"/>
    <property type="molecule type" value="Genomic_DNA"/>
</dbReference>
<dbReference type="RefSeq" id="WP_011635337.1">
    <property type="nucleotide sequence ID" value="NC_008344.1"/>
</dbReference>
<dbReference type="SMR" id="Q0ADK7"/>
<dbReference type="STRING" id="335283.Neut_2351"/>
<dbReference type="KEGG" id="net:Neut_2351"/>
<dbReference type="KEGG" id="net:Neut_2360"/>
<dbReference type="eggNOG" id="COG5487">
    <property type="taxonomic scope" value="Bacteria"/>
</dbReference>
<dbReference type="HOGENOM" id="CLU_187346_2_1_4"/>
<dbReference type="OrthoDB" id="5461362at2"/>
<dbReference type="Proteomes" id="UP000001966">
    <property type="component" value="Chromosome"/>
</dbReference>
<dbReference type="GO" id="GO:0005886">
    <property type="term" value="C:plasma membrane"/>
    <property type="evidence" value="ECO:0007669"/>
    <property type="project" value="UniProtKB-SubCell"/>
</dbReference>
<dbReference type="HAMAP" id="MF_01361">
    <property type="entry name" value="UPF0391"/>
    <property type="match status" value="1"/>
</dbReference>
<dbReference type="InterPro" id="IPR009760">
    <property type="entry name" value="DUF1328"/>
</dbReference>
<dbReference type="NCBIfam" id="NF010229">
    <property type="entry name" value="PRK13682.1-4"/>
    <property type="match status" value="1"/>
</dbReference>
<dbReference type="Pfam" id="PF07043">
    <property type="entry name" value="DUF1328"/>
    <property type="match status" value="1"/>
</dbReference>
<dbReference type="PIRSF" id="PIRSF036466">
    <property type="entry name" value="UCP036466"/>
    <property type="match status" value="1"/>
</dbReference>
<accession>Q0ADK7</accession>
<comment type="subcellular location">
    <subcellularLocation>
        <location evidence="1">Cell membrane</location>
        <topology evidence="1">Multi-pass membrane protein</topology>
    </subcellularLocation>
</comment>
<comment type="similarity">
    <text evidence="1">Belongs to the UPF0391 family.</text>
</comment>
<feature type="chain" id="PRO_5000132570" description="UPF0391 membrane protein Neut_2351/Neut_2360">
    <location>
        <begin position="1"/>
        <end position="55"/>
    </location>
</feature>
<feature type="transmembrane region" description="Helical" evidence="1">
    <location>
        <begin position="4"/>
        <end position="24"/>
    </location>
</feature>
<feature type="transmembrane region" description="Helical" evidence="1">
    <location>
        <begin position="28"/>
        <end position="48"/>
    </location>
</feature>
<sequence>MINLAVVFLIIAVIAALLGVTGVAGMAAEMAWILFVIGIVLAIVFWVLGRRPPPM</sequence>
<evidence type="ECO:0000255" key="1">
    <source>
        <dbReference type="HAMAP-Rule" id="MF_01361"/>
    </source>
</evidence>
<keyword id="KW-1003">Cell membrane</keyword>
<keyword id="KW-0472">Membrane</keyword>
<keyword id="KW-0812">Transmembrane</keyword>
<keyword id="KW-1133">Transmembrane helix</keyword>
<gene>
    <name type="ordered locus">Neut_2351</name>
</gene>
<gene>
    <name type="ordered locus">Neut_2360</name>
</gene>
<reference key="1">
    <citation type="journal article" date="2007" name="Environ. Microbiol.">
        <title>Whole-genome analysis of the ammonia-oxidizing bacterium, Nitrosomonas eutropha C91: implications for niche adaptation.</title>
        <authorList>
            <person name="Stein L.Y."/>
            <person name="Arp D.J."/>
            <person name="Berube P.M."/>
            <person name="Chain P.S."/>
            <person name="Hauser L."/>
            <person name="Jetten M.S."/>
            <person name="Klotz M.G."/>
            <person name="Larimer F.W."/>
            <person name="Norton J.M."/>
            <person name="Op den Camp H.J.M."/>
            <person name="Shin M."/>
            <person name="Wei X."/>
        </authorList>
    </citation>
    <scope>NUCLEOTIDE SEQUENCE [LARGE SCALE GENOMIC DNA]</scope>
    <source>
        <strain>DSM 101675 / C91 / Nm57</strain>
    </source>
</reference>
<name>Y2351_NITEC</name>
<proteinExistence type="inferred from homology"/>
<protein>
    <recommendedName>
        <fullName evidence="1">UPF0391 membrane protein Neut_2351/Neut_2360</fullName>
    </recommendedName>
</protein>
<organism>
    <name type="scientific">Nitrosomonas eutropha (strain DSM 101675 / C91 / Nm57)</name>
    <dbReference type="NCBI Taxonomy" id="335283"/>
    <lineage>
        <taxon>Bacteria</taxon>
        <taxon>Pseudomonadati</taxon>
        <taxon>Pseudomonadota</taxon>
        <taxon>Betaproteobacteria</taxon>
        <taxon>Nitrosomonadales</taxon>
        <taxon>Nitrosomonadaceae</taxon>
        <taxon>Nitrosomonas</taxon>
    </lineage>
</organism>